<accession>Q9R1C0</accession>
<reference key="1">
    <citation type="journal article" date="1999" name="J. Biol. Chem.">
        <title>Isolation of mouse TFIID and functional characterization of TBP and TFIID in mediating estrogen receptor and chromatin transcription.</title>
        <authorList>
            <person name="Wu S.Y."/>
            <person name="Thomas M.C."/>
            <person name="Hou S.Y."/>
            <person name="Likhite V."/>
            <person name="Chiang C.M."/>
        </authorList>
    </citation>
    <scope>NUCLEOTIDE SEQUENCE [MRNA]</scope>
    <scope>FUNCTION</scope>
    <scope>SUBUNIT</scope>
    <scope>SUBCELLULAR LOCATION</scope>
</reference>
<reference key="2">
    <citation type="journal article" date="2005" name="Science">
        <title>The transcriptional landscape of the mammalian genome.</title>
        <authorList>
            <person name="Carninci P."/>
            <person name="Kasukawa T."/>
            <person name="Katayama S."/>
            <person name="Gough J."/>
            <person name="Frith M.C."/>
            <person name="Maeda N."/>
            <person name="Oyama R."/>
            <person name="Ravasi T."/>
            <person name="Lenhard B."/>
            <person name="Wells C."/>
            <person name="Kodzius R."/>
            <person name="Shimokawa K."/>
            <person name="Bajic V.B."/>
            <person name="Brenner S.E."/>
            <person name="Batalov S."/>
            <person name="Forrest A.R."/>
            <person name="Zavolan M."/>
            <person name="Davis M.J."/>
            <person name="Wilming L.G."/>
            <person name="Aidinis V."/>
            <person name="Allen J.E."/>
            <person name="Ambesi-Impiombato A."/>
            <person name="Apweiler R."/>
            <person name="Aturaliya R.N."/>
            <person name="Bailey T.L."/>
            <person name="Bansal M."/>
            <person name="Baxter L."/>
            <person name="Beisel K.W."/>
            <person name="Bersano T."/>
            <person name="Bono H."/>
            <person name="Chalk A.M."/>
            <person name="Chiu K.P."/>
            <person name="Choudhary V."/>
            <person name="Christoffels A."/>
            <person name="Clutterbuck D.R."/>
            <person name="Crowe M.L."/>
            <person name="Dalla E."/>
            <person name="Dalrymple B.P."/>
            <person name="de Bono B."/>
            <person name="Della Gatta G."/>
            <person name="di Bernardo D."/>
            <person name="Down T."/>
            <person name="Engstrom P."/>
            <person name="Fagiolini M."/>
            <person name="Faulkner G."/>
            <person name="Fletcher C.F."/>
            <person name="Fukushima T."/>
            <person name="Furuno M."/>
            <person name="Futaki S."/>
            <person name="Gariboldi M."/>
            <person name="Georgii-Hemming P."/>
            <person name="Gingeras T.R."/>
            <person name="Gojobori T."/>
            <person name="Green R.E."/>
            <person name="Gustincich S."/>
            <person name="Harbers M."/>
            <person name="Hayashi Y."/>
            <person name="Hensch T.K."/>
            <person name="Hirokawa N."/>
            <person name="Hill D."/>
            <person name="Huminiecki L."/>
            <person name="Iacono M."/>
            <person name="Ikeo K."/>
            <person name="Iwama A."/>
            <person name="Ishikawa T."/>
            <person name="Jakt M."/>
            <person name="Kanapin A."/>
            <person name="Katoh M."/>
            <person name="Kawasawa Y."/>
            <person name="Kelso J."/>
            <person name="Kitamura H."/>
            <person name="Kitano H."/>
            <person name="Kollias G."/>
            <person name="Krishnan S.P."/>
            <person name="Kruger A."/>
            <person name="Kummerfeld S.K."/>
            <person name="Kurochkin I.V."/>
            <person name="Lareau L.F."/>
            <person name="Lazarevic D."/>
            <person name="Lipovich L."/>
            <person name="Liu J."/>
            <person name="Liuni S."/>
            <person name="McWilliam S."/>
            <person name="Madan Babu M."/>
            <person name="Madera M."/>
            <person name="Marchionni L."/>
            <person name="Matsuda H."/>
            <person name="Matsuzawa S."/>
            <person name="Miki H."/>
            <person name="Mignone F."/>
            <person name="Miyake S."/>
            <person name="Morris K."/>
            <person name="Mottagui-Tabar S."/>
            <person name="Mulder N."/>
            <person name="Nakano N."/>
            <person name="Nakauchi H."/>
            <person name="Ng P."/>
            <person name="Nilsson R."/>
            <person name="Nishiguchi S."/>
            <person name="Nishikawa S."/>
            <person name="Nori F."/>
            <person name="Ohara O."/>
            <person name="Okazaki Y."/>
            <person name="Orlando V."/>
            <person name="Pang K.C."/>
            <person name="Pavan W.J."/>
            <person name="Pavesi G."/>
            <person name="Pesole G."/>
            <person name="Petrovsky N."/>
            <person name="Piazza S."/>
            <person name="Reed J."/>
            <person name="Reid J.F."/>
            <person name="Ring B.Z."/>
            <person name="Ringwald M."/>
            <person name="Rost B."/>
            <person name="Ruan Y."/>
            <person name="Salzberg S.L."/>
            <person name="Sandelin A."/>
            <person name="Schneider C."/>
            <person name="Schoenbach C."/>
            <person name="Sekiguchi K."/>
            <person name="Semple C.A."/>
            <person name="Seno S."/>
            <person name="Sessa L."/>
            <person name="Sheng Y."/>
            <person name="Shibata Y."/>
            <person name="Shimada H."/>
            <person name="Shimada K."/>
            <person name="Silva D."/>
            <person name="Sinclair B."/>
            <person name="Sperling S."/>
            <person name="Stupka E."/>
            <person name="Sugiura K."/>
            <person name="Sultana R."/>
            <person name="Takenaka Y."/>
            <person name="Taki K."/>
            <person name="Tammoja K."/>
            <person name="Tan S.L."/>
            <person name="Tang S."/>
            <person name="Taylor M.S."/>
            <person name="Tegner J."/>
            <person name="Teichmann S.A."/>
            <person name="Ueda H.R."/>
            <person name="van Nimwegen E."/>
            <person name="Verardo R."/>
            <person name="Wei C.L."/>
            <person name="Yagi K."/>
            <person name="Yamanishi H."/>
            <person name="Zabarovsky E."/>
            <person name="Zhu S."/>
            <person name="Zimmer A."/>
            <person name="Hide W."/>
            <person name="Bult C."/>
            <person name="Grimmond S.M."/>
            <person name="Teasdale R.D."/>
            <person name="Liu E.T."/>
            <person name="Brusic V."/>
            <person name="Quackenbush J."/>
            <person name="Wahlestedt C."/>
            <person name="Mattick J.S."/>
            <person name="Hume D.A."/>
            <person name="Kai C."/>
            <person name="Sasaki D."/>
            <person name="Tomaru Y."/>
            <person name="Fukuda S."/>
            <person name="Kanamori-Katayama M."/>
            <person name="Suzuki M."/>
            <person name="Aoki J."/>
            <person name="Arakawa T."/>
            <person name="Iida J."/>
            <person name="Imamura K."/>
            <person name="Itoh M."/>
            <person name="Kato T."/>
            <person name="Kawaji H."/>
            <person name="Kawagashira N."/>
            <person name="Kawashima T."/>
            <person name="Kojima M."/>
            <person name="Kondo S."/>
            <person name="Konno H."/>
            <person name="Nakano K."/>
            <person name="Ninomiya N."/>
            <person name="Nishio T."/>
            <person name="Okada M."/>
            <person name="Plessy C."/>
            <person name="Shibata K."/>
            <person name="Shiraki T."/>
            <person name="Suzuki S."/>
            <person name="Tagami M."/>
            <person name="Waki K."/>
            <person name="Watahiki A."/>
            <person name="Okamura-Oho Y."/>
            <person name="Suzuki H."/>
            <person name="Kawai J."/>
            <person name="Hayashizaki Y."/>
        </authorList>
    </citation>
    <scope>NUCLEOTIDE SEQUENCE [LARGE SCALE MRNA]</scope>
    <source>
        <strain>C57BL/6J</strain>
        <tissue>Head</tissue>
        <tissue>Skin</tissue>
    </source>
</reference>
<reference key="3">
    <citation type="journal article" date="2004" name="Genome Res.">
        <title>The status, quality, and expansion of the NIH full-length cDNA project: the Mammalian Gene Collection (MGC).</title>
        <authorList>
            <consortium name="The MGC Project Team"/>
        </authorList>
    </citation>
    <scope>NUCLEOTIDE SEQUENCE [LARGE SCALE MRNA]</scope>
    <source>
        <strain>FVB/N-3</strain>
        <tissue>Mammary gland</tissue>
    </source>
</reference>
<reference key="4">
    <citation type="journal article" date="2007" name="Proc. Natl. Acad. Sci. U.S.A.">
        <title>Large-scale phosphorylation analysis of mouse liver.</title>
        <authorList>
            <person name="Villen J."/>
            <person name="Beausoleil S.A."/>
            <person name="Gerber S.A."/>
            <person name="Gygi S.P."/>
        </authorList>
    </citation>
    <scope>PHOSPHORYLATION [LARGE SCALE ANALYSIS] AT SER-256</scope>
    <scope>IDENTIFICATION BY MASS SPECTROMETRY [LARGE SCALE ANALYSIS]</scope>
    <source>
        <tissue>Liver</tissue>
    </source>
</reference>
<reference key="5">
    <citation type="journal article" date="2010" name="Cell">
        <title>A tissue-specific atlas of mouse protein phosphorylation and expression.</title>
        <authorList>
            <person name="Huttlin E.L."/>
            <person name="Jedrychowski M.P."/>
            <person name="Elias J.E."/>
            <person name="Goswami T."/>
            <person name="Rad R."/>
            <person name="Beausoleil S.A."/>
            <person name="Villen J."/>
            <person name="Haas W."/>
            <person name="Sowa M.E."/>
            <person name="Gygi S.P."/>
        </authorList>
    </citation>
    <scope>PHOSPHORYLATION [LARGE SCALE ANALYSIS] AT SER-171 AND SER-256</scope>
    <scope>IDENTIFICATION BY MASS SPECTROMETRY [LARGE SCALE ANALYSIS]</scope>
    <source>
        <tissue>Kidney</tissue>
        <tissue>Lung</tissue>
        <tissue>Spleen</tissue>
        <tissue>Testis</tissue>
    </source>
</reference>
<evidence type="ECO:0000250" key="1"/>
<evidence type="ECO:0000250" key="2">
    <source>
        <dbReference type="UniProtKB" id="Q15545"/>
    </source>
</evidence>
<evidence type="ECO:0000255" key="3"/>
<evidence type="ECO:0000256" key="4">
    <source>
        <dbReference type="SAM" id="MobiDB-lite"/>
    </source>
</evidence>
<evidence type="ECO:0000269" key="5">
    <source>
    </source>
</evidence>
<evidence type="ECO:0000303" key="6">
    <source>
    </source>
</evidence>
<evidence type="ECO:0000305" key="7"/>
<evidence type="ECO:0007744" key="8">
    <source>
    </source>
</evidence>
<evidence type="ECO:0007744" key="9">
    <source>
    </source>
</evidence>
<keyword id="KW-0175">Coiled coil</keyword>
<keyword id="KW-0539">Nucleus</keyword>
<keyword id="KW-0597">Phosphoprotein</keyword>
<keyword id="KW-1185">Reference proteome</keyword>
<keyword id="KW-0804">Transcription</keyword>
<keyword id="KW-0805">Transcription regulation</keyword>
<keyword id="KW-0832">Ubl conjugation</keyword>
<name>TAF7_MOUSE</name>
<sequence>MSKNKDDAPHELESQFILRLPPEYAATVRRAVQSGHVNLKDKLSIELHPDGRHGIVRVDRVPLAAKLVDLPCVTESLKTIDKKTFYKTADISQMLVATVDGDLYPPVEEAAATADPKANKKKDKDKEKKFVWNHGITLPLKNVRKRRFRKTAKKKYIESPDVEKEVKRLLSTDAEAVSTRWEIIAEDETKETENQGLDISSPGMSGHRQGHDSLEHDELREIFNDLSSSSEDEEDVNILDTEEDLERQLQDKLNESDEQHQENEGTNQLVMGIQKQIDNMKGKLQETQDRAKRQEDLIMKVENLALKNRFQAVLDELKQKEDREKEQLSSLQEELESLLEK</sequence>
<feature type="chain" id="PRO_0000118882" description="Transcription initiation factor TFIID subunit 7">
    <location>
        <begin position="1"/>
        <end position="341"/>
    </location>
</feature>
<feature type="region of interest" description="Disordered" evidence="4">
    <location>
        <begin position="187"/>
        <end position="212"/>
    </location>
</feature>
<feature type="coiled-coil region" evidence="3">
    <location>
        <begin position="236"/>
        <end position="341"/>
    </location>
</feature>
<feature type="short sequence motif" description="[KR]-[STA]-K motif">
    <location>
        <begin position="3"/>
        <end position="5"/>
    </location>
</feature>
<feature type="modified residue" description="Phosphoserine" evidence="9">
    <location>
        <position position="171"/>
    </location>
</feature>
<feature type="modified residue" description="Phosphoserine" evidence="2">
    <location>
        <position position="200"/>
    </location>
</feature>
<feature type="modified residue" description="Phosphoserine" evidence="2">
    <location>
        <position position="201"/>
    </location>
</feature>
<feature type="modified residue" description="Phosphoserine" evidence="2">
    <location>
        <position position="213"/>
    </location>
</feature>
<feature type="modified residue" description="Phosphoserine" evidence="8 9">
    <location>
        <position position="256"/>
    </location>
</feature>
<proteinExistence type="evidence at protein level"/>
<comment type="function">
    <text evidence="2 5">The TFIID basal transcription factor complex plays a major role in the initiation of RNA polymerase II (Pol II)-dependent transcription. TFIID recognizes and binds promoters with or without a TATA box via its subunit TBP, a TATA-box-binding protein, and promotes assembly of the pre-initiation complex (PIC). The TFIID complex consists of TBP and TBP-associated factors (TAFs), including TAF1, TAF2, TAF3, TAF4, TAF5, TAF6, TAF7, TAF8, TAF9, TAF10, TAF11, TAF12 and TAF13. TAF7 forms a promoter DNA binding subcomplex of TFIID, together with TAF1 and TAF2. Part of a TFIID complex containing TAF10 (TFIID alpha) and a TFIID complex lacking TAF10 (TFIID beta).</text>
</comment>
<comment type="subunit">
    <text evidence="2 5">Component of the TFIID basal transcription factor complex, composed of TATA-box-binding protein TBP, and a number of TBP-associated factors (TAFs), including TAF1, TAF2, TAF3, TAF4, TAF5, TAF6, TAF7, TAF8, TAF9, TAF10, TAF11, TAF12 and TAF13. Part of a TFIID-containing RNA polymerase II pre-initiation complex that is composed of TBP and at least GTF2A1, GTF2A2, GTF2E1, GTF2E2, GTF2F1, GTF2H2, GTF2H3, GTF2H4, GTF2H5, GTF2B, TCEA1, ERCC2, ERCC3, TAF1, TAF2, TAF3, TAF4, TAF5, TAF6, TAF7, TAF8, TAF9, TAF10, TAF11, TAF12 and TAF13. Interacts with TAF1; the interaction is direct (By similarity). Interacts with TAF1, TAF5, TAF11, TAF12, and TAF13, but not with TAF10 or TBP (PubMed:10438527). Component of some MLL1/MLL complex, at least composed of the core components KMT2A/MLL1, ASH2L, HCFC1/HCF1, WDR5 and RBBP5, as well as the facultative components BACC1, CHD8, E2F6, HSP70, INO80C, KANSL1, LAS1L, MAX, MCRS1, MGA, MYST1/MOF, PELP1, PHF20, PRP31, RING2, RUVB1/TIP49A, RUVB2/TIP49B, SENP3, TAF1, TAF4, TAF6, TAF7, TAF9 and TEX10. Interacts with CIITA and TAF1 and inhibits their acetyltransferase activity, and behaving as a repressor of CIITA- and TAF1-regulated promoters (By similarity).</text>
</comment>
<comment type="subcellular location">
    <subcellularLocation>
        <location evidence="5">Nucleus</location>
    </subcellularLocation>
</comment>
<comment type="domain">
    <text evidence="1">The [KR]-[STA]-K motif is specifically recognized by the SETD7 methyltransferase.</text>
</comment>
<comment type="PTM">
    <text evidence="2">Phosphorylated by CIITA. Phosphorylation at Ser-256 by TAF1 in early G1 phase disrupts binding to TAF1 (By similarity).</text>
</comment>
<comment type="PTM">
    <text evidence="2">Ubiquitinated by TRIM26; leading to proteasomal degradation.</text>
</comment>
<comment type="similarity">
    <text evidence="7">Belongs to the TAF7 family.</text>
</comment>
<organism>
    <name type="scientific">Mus musculus</name>
    <name type="common">Mouse</name>
    <dbReference type="NCBI Taxonomy" id="10090"/>
    <lineage>
        <taxon>Eukaryota</taxon>
        <taxon>Metazoa</taxon>
        <taxon>Chordata</taxon>
        <taxon>Craniata</taxon>
        <taxon>Vertebrata</taxon>
        <taxon>Euteleostomi</taxon>
        <taxon>Mammalia</taxon>
        <taxon>Eutheria</taxon>
        <taxon>Euarchontoglires</taxon>
        <taxon>Glires</taxon>
        <taxon>Rodentia</taxon>
        <taxon>Myomorpha</taxon>
        <taxon>Muroidea</taxon>
        <taxon>Muridae</taxon>
        <taxon>Murinae</taxon>
        <taxon>Mus</taxon>
        <taxon>Mus</taxon>
    </lineage>
</organism>
<protein>
    <recommendedName>
        <fullName>Transcription initiation factor TFIID subunit 7</fullName>
    </recommendedName>
    <alternativeName>
        <fullName>RNA polymerase II TBP-associated factor subunit F</fullName>
    </alternativeName>
    <alternativeName>
        <fullName>Transcription initiation factor TFIID 55 kDa subunit</fullName>
        <shortName>TAF(II)55</shortName>
        <shortName>TAFII-55</shortName>
        <shortName evidence="6">TAFII55</shortName>
    </alternativeName>
</protein>
<dbReference type="EMBL" id="AF144562">
    <property type="protein sequence ID" value="AAD46767.1"/>
    <property type="molecule type" value="mRNA"/>
</dbReference>
<dbReference type="EMBL" id="AK029380">
    <property type="protein sequence ID" value="BAC26429.1"/>
    <property type="molecule type" value="mRNA"/>
</dbReference>
<dbReference type="EMBL" id="AK076362">
    <property type="protein sequence ID" value="BAC36313.1"/>
    <property type="molecule type" value="mRNA"/>
</dbReference>
<dbReference type="EMBL" id="BC029673">
    <property type="protein sequence ID" value="AAH29673.1"/>
    <property type="molecule type" value="mRNA"/>
</dbReference>
<dbReference type="CCDS" id="CCDS29189.1"/>
<dbReference type="RefSeq" id="NP_786964.1">
    <property type="nucleotide sequence ID" value="NM_175770.4"/>
</dbReference>
<dbReference type="SMR" id="Q9R1C0"/>
<dbReference type="BioGRID" id="204884">
    <property type="interactions" value="1"/>
</dbReference>
<dbReference type="ComplexPortal" id="CPX-916">
    <property type="entry name" value="TFTC histone acetylation complex"/>
</dbReference>
<dbReference type="ComplexPortal" id="CPX-932">
    <property type="entry name" value="General transcription factor complex TFIID"/>
</dbReference>
<dbReference type="ComplexPortal" id="CPX-959">
    <property type="entry name" value="General transcription factor complex TFIID, Taf4b variant"/>
</dbReference>
<dbReference type="CORUM" id="Q9R1C0"/>
<dbReference type="FunCoup" id="Q9R1C0">
    <property type="interactions" value="3042"/>
</dbReference>
<dbReference type="IntAct" id="Q9R1C0">
    <property type="interactions" value="1"/>
</dbReference>
<dbReference type="STRING" id="10090.ENSMUSP00000065645"/>
<dbReference type="GlyGen" id="Q9R1C0">
    <property type="glycosylation" value="1 site, 1 O-linked glycan (1 site)"/>
</dbReference>
<dbReference type="iPTMnet" id="Q9R1C0"/>
<dbReference type="PhosphoSitePlus" id="Q9R1C0"/>
<dbReference type="jPOST" id="Q9R1C0"/>
<dbReference type="PaxDb" id="10090-ENSMUSP00000065645"/>
<dbReference type="PeptideAtlas" id="Q9R1C0"/>
<dbReference type="ProteomicsDB" id="262925"/>
<dbReference type="Pumba" id="Q9R1C0"/>
<dbReference type="Antibodypedia" id="1826">
    <property type="antibodies" value="182 antibodies from 26 providers"/>
</dbReference>
<dbReference type="DNASU" id="24074"/>
<dbReference type="Ensembl" id="ENSMUST00000066272.6">
    <property type="protein sequence ID" value="ENSMUSP00000065645.5"/>
    <property type="gene ID" value="ENSMUSG00000051316.9"/>
</dbReference>
<dbReference type="GeneID" id="24074"/>
<dbReference type="KEGG" id="mmu:24074"/>
<dbReference type="UCSC" id="uc008eqi.2">
    <property type="organism name" value="mouse"/>
</dbReference>
<dbReference type="AGR" id="MGI:1346348"/>
<dbReference type="CTD" id="6879"/>
<dbReference type="MGI" id="MGI:1346348">
    <property type="gene designation" value="Taf7"/>
</dbReference>
<dbReference type="VEuPathDB" id="HostDB:ENSMUSG00000051316"/>
<dbReference type="eggNOG" id="KOG4011">
    <property type="taxonomic scope" value="Eukaryota"/>
</dbReference>
<dbReference type="GeneTree" id="ENSGT00940000160861"/>
<dbReference type="HOGENOM" id="CLU_037860_0_1_1"/>
<dbReference type="InParanoid" id="Q9R1C0"/>
<dbReference type="OMA" id="NESDEHH"/>
<dbReference type="OrthoDB" id="153872at2759"/>
<dbReference type="PhylomeDB" id="Q9R1C0"/>
<dbReference type="TreeFam" id="TF313044"/>
<dbReference type="Reactome" id="R-MMU-674695">
    <property type="pathway name" value="RNA Polymerase II Pre-transcription Events"/>
</dbReference>
<dbReference type="Reactome" id="R-MMU-6804756">
    <property type="pathway name" value="Regulation of TP53 Activity through Phosphorylation"/>
</dbReference>
<dbReference type="Reactome" id="R-MMU-73776">
    <property type="pathway name" value="RNA Polymerase II Promoter Escape"/>
</dbReference>
<dbReference type="Reactome" id="R-MMU-73779">
    <property type="pathway name" value="RNA Polymerase II Transcription Pre-Initiation And Promoter Opening"/>
</dbReference>
<dbReference type="Reactome" id="R-MMU-75953">
    <property type="pathway name" value="RNA Polymerase II Transcription Initiation"/>
</dbReference>
<dbReference type="Reactome" id="R-MMU-76042">
    <property type="pathway name" value="RNA Polymerase II Transcription Initiation And Promoter Clearance"/>
</dbReference>
<dbReference type="BioGRID-ORCS" id="24074">
    <property type="hits" value="15 hits in 83 CRISPR screens"/>
</dbReference>
<dbReference type="ChiTaRS" id="Taf7">
    <property type="organism name" value="mouse"/>
</dbReference>
<dbReference type="PRO" id="PR:Q9R1C0"/>
<dbReference type="Proteomes" id="UP000000589">
    <property type="component" value="Chromosome 18"/>
</dbReference>
<dbReference type="RNAct" id="Q9R1C0">
    <property type="molecule type" value="protein"/>
</dbReference>
<dbReference type="Bgee" id="ENSMUSG00000051316">
    <property type="expression patterns" value="Expressed in animal zygote and 222 other cell types or tissues"/>
</dbReference>
<dbReference type="GO" id="GO:0005737">
    <property type="term" value="C:cytoplasm"/>
    <property type="evidence" value="ECO:0000314"/>
    <property type="project" value="MGI"/>
</dbReference>
<dbReference type="GO" id="GO:0001673">
    <property type="term" value="C:male germ cell nucleus"/>
    <property type="evidence" value="ECO:0000314"/>
    <property type="project" value="MGI"/>
</dbReference>
<dbReference type="GO" id="GO:0071339">
    <property type="term" value="C:MLL1 complex"/>
    <property type="evidence" value="ECO:0000250"/>
    <property type="project" value="UniProtKB"/>
</dbReference>
<dbReference type="GO" id="GO:0005634">
    <property type="term" value="C:nucleus"/>
    <property type="evidence" value="ECO:0000314"/>
    <property type="project" value="MGI"/>
</dbReference>
<dbReference type="GO" id="GO:0005669">
    <property type="term" value="C:transcription factor TFIID complex"/>
    <property type="evidence" value="ECO:0000314"/>
    <property type="project" value="MGI"/>
</dbReference>
<dbReference type="GO" id="GO:0033276">
    <property type="term" value="C:transcription factor TFTC complex"/>
    <property type="evidence" value="ECO:0000303"/>
    <property type="project" value="ComplexPortal"/>
</dbReference>
<dbReference type="GO" id="GO:0035035">
    <property type="term" value="F:histone acetyltransferase binding"/>
    <property type="evidence" value="ECO:0000353"/>
    <property type="project" value="UniProtKB"/>
</dbReference>
<dbReference type="GO" id="GO:0061628">
    <property type="term" value="F:histone H3K27me3 reader activity"/>
    <property type="evidence" value="ECO:0007669"/>
    <property type="project" value="Ensembl"/>
</dbReference>
<dbReference type="GO" id="GO:0046966">
    <property type="term" value="F:nuclear thyroid hormone receptor binding"/>
    <property type="evidence" value="ECO:0007669"/>
    <property type="project" value="Ensembl"/>
</dbReference>
<dbReference type="GO" id="GO:0042809">
    <property type="term" value="F:nuclear vitamin D receptor binding"/>
    <property type="evidence" value="ECO:0007669"/>
    <property type="project" value="Ensembl"/>
</dbReference>
<dbReference type="GO" id="GO:0106140">
    <property type="term" value="F:P-TEFb complex binding"/>
    <property type="evidence" value="ECO:0007669"/>
    <property type="project" value="Ensembl"/>
</dbReference>
<dbReference type="GO" id="GO:0046982">
    <property type="term" value="F:protein heterodimerization activity"/>
    <property type="evidence" value="ECO:0007669"/>
    <property type="project" value="Ensembl"/>
</dbReference>
<dbReference type="GO" id="GO:0016251">
    <property type="term" value="F:RNA polymerase II general transcription initiation factor activity"/>
    <property type="evidence" value="ECO:0007669"/>
    <property type="project" value="Ensembl"/>
</dbReference>
<dbReference type="GO" id="GO:0001097">
    <property type="term" value="F:TFIIH-class transcription factor complex binding"/>
    <property type="evidence" value="ECO:0007669"/>
    <property type="project" value="Ensembl"/>
</dbReference>
<dbReference type="GO" id="GO:0000976">
    <property type="term" value="F:transcription cis-regulatory region binding"/>
    <property type="evidence" value="ECO:0007669"/>
    <property type="project" value="Ensembl"/>
</dbReference>
<dbReference type="GO" id="GO:0030520">
    <property type="term" value="P:estrogen receptor signaling pathway"/>
    <property type="evidence" value="ECO:0000314"/>
    <property type="project" value="MGI"/>
</dbReference>
<dbReference type="GO" id="GO:0042789">
    <property type="term" value="P:mRNA transcription by RNA polymerase II"/>
    <property type="evidence" value="ECO:0000266"/>
    <property type="project" value="ComplexPortal"/>
</dbReference>
<dbReference type="GO" id="GO:0045344">
    <property type="term" value="P:negative regulation of MHC class I biosynthetic process"/>
    <property type="evidence" value="ECO:0007669"/>
    <property type="project" value="Ensembl"/>
</dbReference>
<dbReference type="GO" id="GO:0045347">
    <property type="term" value="P:negative regulation of MHC class II biosynthetic process"/>
    <property type="evidence" value="ECO:0007669"/>
    <property type="project" value="Ensembl"/>
</dbReference>
<dbReference type="GO" id="GO:0000122">
    <property type="term" value="P:negative regulation of transcription by RNA polymerase II"/>
    <property type="evidence" value="ECO:0007669"/>
    <property type="project" value="Ensembl"/>
</dbReference>
<dbReference type="GO" id="GO:0045893">
    <property type="term" value="P:positive regulation of DNA-templated transcription"/>
    <property type="evidence" value="ECO:0000303"/>
    <property type="project" value="ComplexPortal"/>
</dbReference>
<dbReference type="GO" id="GO:0060261">
    <property type="term" value="P:positive regulation of transcription initiation by RNA polymerase II"/>
    <property type="evidence" value="ECO:0000266"/>
    <property type="project" value="ComplexPortal"/>
</dbReference>
<dbReference type="GO" id="GO:0006282">
    <property type="term" value="P:regulation of DNA repair"/>
    <property type="evidence" value="ECO:0000303"/>
    <property type="project" value="ComplexPortal"/>
</dbReference>
<dbReference type="GO" id="GO:0006357">
    <property type="term" value="P:regulation of transcription by RNA polymerase II"/>
    <property type="evidence" value="ECO:0000314"/>
    <property type="project" value="MGI"/>
</dbReference>
<dbReference type="GO" id="GO:0051123">
    <property type="term" value="P:RNA polymerase II preinitiation complex assembly"/>
    <property type="evidence" value="ECO:0000266"/>
    <property type="project" value="ComplexPortal"/>
</dbReference>
<dbReference type="GO" id="GO:0006366">
    <property type="term" value="P:transcription by RNA polymerase II"/>
    <property type="evidence" value="ECO:0000314"/>
    <property type="project" value="MGI"/>
</dbReference>
<dbReference type="CDD" id="cd08047">
    <property type="entry name" value="TAF7"/>
    <property type="match status" value="1"/>
</dbReference>
<dbReference type="InterPro" id="IPR037817">
    <property type="entry name" value="TAF7"/>
</dbReference>
<dbReference type="InterPro" id="IPR006751">
    <property type="entry name" value="TAFII55_prot_cons_reg"/>
</dbReference>
<dbReference type="PANTHER" id="PTHR12228">
    <property type="entry name" value="TRANSCRIPTION INITIATION FACTOR TFIID 55 KD SUBUNIT-RELATED"/>
    <property type="match status" value="1"/>
</dbReference>
<dbReference type="PANTHER" id="PTHR12228:SF6">
    <property type="entry name" value="TRANSCRIPTION INITIATION FACTOR TFIID SUBUNIT 7"/>
    <property type="match status" value="1"/>
</dbReference>
<dbReference type="Pfam" id="PF04658">
    <property type="entry name" value="TAFII55_N"/>
    <property type="match status" value="1"/>
</dbReference>
<dbReference type="SMART" id="SM01370">
    <property type="entry name" value="TAFII55_N"/>
    <property type="match status" value="1"/>
</dbReference>
<gene>
    <name type="primary">Taf7</name>
    <name type="synonym">Taf2f</name>
</gene>